<organism>
    <name type="scientific">Histophilus somni (strain 2336)</name>
    <name type="common">Haemophilus somnus</name>
    <dbReference type="NCBI Taxonomy" id="228400"/>
    <lineage>
        <taxon>Bacteria</taxon>
        <taxon>Pseudomonadati</taxon>
        <taxon>Pseudomonadota</taxon>
        <taxon>Gammaproteobacteria</taxon>
        <taxon>Pasteurellales</taxon>
        <taxon>Pasteurellaceae</taxon>
        <taxon>Histophilus</taxon>
    </lineage>
</organism>
<sequence>MSFIKEFREFAMRGNVIDMAVGVIIGGAFGKIVSSLVADVIMPILSFFTSSVDFKDLHIVLKEATDKTPAMTLKYGMFIQNIFDFIIIAFAIFLMIKALNKLKKEEPKVEKVITPSNEEKLLTEIRDLLKK</sequence>
<feature type="chain" id="PRO_1000094896" description="Large-conductance mechanosensitive channel">
    <location>
        <begin position="1"/>
        <end position="131"/>
    </location>
</feature>
<feature type="transmembrane region" description="Helical" evidence="1">
    <location>
        <begin position="21"/>
        <end position="41"/>
    </location>
</feature>
<feature type="transmembrane region" description="Helical" evidence="1">
    <location>
        <begin position="76"/>
        <end position="96"/>
    </location>
</feature>
<reference key="1">
    <citation type="submission" date="2008-02" db="EMBL/GenBank/DDBJ databases">
        <title>Complete sequence of Haemophilus somnus 2336.</title>
        <authorList>
            <consortium name="US DOE Joint Genome Institute"/>
            <person name="Siddaramappa S."/>
            <person name="Duncan A.J."/>
            <person name="Challacombe J.F."/>
            <person name="Rainey D."/>
            <person name="Gillaspy A.F."/>
            <person name="Carson M."/>
            <person name="Gipson J."/>
            <person name="Gipson M."/>
            <person name="Bruce D."/>
            <person name="Detter J.C."/>
            <person name="Han C.S."/>
            <person name="Land M."/>
            <person name="Tapia R."/>
            <person name="Thompson L.S."/>
            <person name="Orvis J."/>
            <person name="Zaitshik J."/>
            <person name="Barnes G."/>
            <person name="Brettin T.S."/>
            <person name="Dyer D.W."/>
            <person name="Inzana T.J."/>
        </authorList>
    </citation>
    <scope>NUCLEOTIDE SEQUENCE [LARGE SCALE GENOMIC DNA]</scope>
    <source>
        <strain>2336</strain>
    </source>
</reference>
<comment type="function">
    <text evidence="1">Channel that opens in response to stretch forces in the membrane lipid bilayer. May participate in the regulation of osmotic pressure changes within the cell.</text>
</comment>
<comment type="subunit">
    <text evidence="1">Homopentamer.</text>
</comment>
<comment type="subcellular location">
    <subcellularLocation>
        <location evidence="1">Cell inner membrane</location>
        <topology evidence="1">Multi-pass membrane protein</topology>
    </subcellularLocation>
</comment>
<comment type="similarity">
    <text evidence="1">Belongs to the MscL family.</text>
</comment>
<evidence type="ECO:0000255" key="1">
    <source>
        <dbReference type="HAMAP-Rule" id="MF_00115"/>
    </source>
</evidence>
<gene>
    <name evidence="1" type="primary">mscL</name>
    <name type="ordered locus">HSM_1930</name>
</gene>
<accession>B0UWZ1</accession>
<name>MSCL_HISS2</name>
<proteinExistence type="inferred from homology"/>
<dbReference type="EMBL" id="CP000947">
    <property type="protein sequence ID" value="ACA31722.1"/>
    <property type="molecule type" value="Genomic_DNA"/>
</dbReference>
<dbReference type="RefSeq" id="WP_011608196.1">
    <property type="nucleotide sequence ID" value="NC_010519.1"/>
</dbReference>
<dbReference type="SMR" id="B0UWZ1"/>
<dbReference type="STRING" id="228400.HSM_1930"/>
<dbReference type="GeneID" id="31488241"/>
<dbReference type="KEGG" id="hsm:HSM_1930"/>
<dbReference type="HOGENOM" id="CLU_095787_0_0_6"/>
<dbReference type="GO" id="GO:0005886">
    <property type="term" value="C:plasma membrane"/>
    <property type="evidence" value="ECO:0007669"/>
    <property type="project" value="UniProtKB-SubCell"/>
</dbReference>
<dbReference type="GO" id="GO:0008381">
    <property type="term" value="F:mechanosensitive monoatomic ion channel activity"/>
    <property type="evidence" value="ECO:0007669"/>
    <property type="project" value="UniProtKB-UniRule"/>
</dbReference>
<dbReference type="FunFam" id="1.10.1200.120:FF:000001">
    <property type="entry name" value="Large-conductance mechanosensitive channel"/>
    <property type="match status" value="1"/>
</dbReference>
<dbReference type="Gene3D" id="1.10.1200.120">
    <property type="entry name" value="Large-conductance mechanosensitive channel, MscL, domain 1"/>
    <property type="match status" value="1"/>
</dbReference>
<dbReference type="HAMAP" id="MF_00115">
    <property type="entry name" value="MscL"/>
    <property type="match status" value="1"/>
</dbReference>
<dbReference type="InterPro" id="IPR019823">
    <property type="entry name" value="Mechanosensitive_channel_CS"/>
</dbReference>
<dbReference type="InterPro" id="IPR001185">
    <property type="entry name" value="MS_channel"/>
</dbReference>
<dbReference type="InterPro" id="IPR037673">
    <property type="entry name" value="MSC/AndL"/>
</dbReference>
<dbReference type="InterPro" id="IPR036019">
    <property type="entry name" value="MscL_channel"/>
</dbReference>
<dbReference type="NCBIfam" id="TIGR00220">
    <property type="entry name" value="mscL"/>
    <property type="match status" value="1"/>
</dbReference>
<dbReference type="NCBIfam" id="NF001843">
    <property type="entry name" value="PRK00567.1-4"/>
    <property type="match status" value="1"/>
</dbReference>
<dbReference type="PANTHER" id="PTHR30266:SF2">
    <property type="entry name" value="LARGE-CONDUCTANCE MECHANOSENSITIVE CHANNEL"/>
    <property type="match status" value="1"/>
</dbReference>
<dbReference type="PANTHER" id="PTHR30266">
    <property type="entry name" value="MECHANOSENSITIVE CHANNEL MSCL"/>
    <property type="match status" value="1"/>
</dbReference>
<dbReference type="Pfam" id="PF01741">
    <property type="entry name" value="MscL"/>
    <property type="match status" value="1"/>
</dbReference>
<dbReference type="PRINTS" id="PR01264">
    <property type="entry name" value="MECHCHANNEL"/>
</dbReference>
<dbReference type="SUPFAM" id="SSF81330">
    <property type="entry name" value="Gated mechanosensitive channel"/>
    <property type="match status" value="1"/>
</dbReference>
<dbReference type="PROSITE" id="PS01327">
    <property type="entry name" value="MSCL"/>
    <property type="match status" value="1"/>
</dbReference>
<keyword id="KW-0997">Cell inner membrane</keyword>
<keyword id="KW-1003">Cell membrane</keyword>
<keyword id="KW-0407">Ion channel</keyword>
<keyword id="KW-0406">Ion transport</keyword>
<keyword id="KW-0472">Membrane</keyword>
<keyword id="KW-0812">Transmembrane</keyword>
<keyword id="KW-1133">Transmembrane helix</keyword>
<keyword id="KW-0813">Transport</keyword>
<protein>
    <recommendedName>
        <fullName evidence="1">Large-conductance mechanosensitive channel</fullName>
    </recommendedName>
</protein>